<comment type="function">
    <text evidence="1">Transfers and isomerizes the ribose moiety from AdoMet to the 7-aminomethyl group of 7-deazaguanine (preQ1-tRNA) to give epoxyqueuosine (oQ-tRNA).</text>
</comment>
<comment type="catalytic activity">
    <reaction evidence="1">
        <text>7-aminomethyl-7-carbaguanosine(34) in tRNA + S-adenosyl-L-methionine = epoxyqueuosine(34) in tRNA + adenine + L-methionine + 2 H(+)</text>
        <dbReference type="Rhea" id="RHEA:32155"/>
        <dbReference type="Rhea" id="RHEA-COMP:10342"/>
        <dbReference type="Rhea" id="RHEA-COMP:18582"/>
        <dbReference type="ChEBI" id="CHEBI:15378"/>
        <dbReference type="ChEBI" id="CHEBI:16708"/>
        <dbReference type="ChEBI" id="CHEBI:57844"/>
        <dbReference type="ChEBI" id="CHEBI:59789"/>
        <dbReference type="ChEBI" id="CHEBI:82833"/>
        <dbReference type="ChEBI" id="CHEBI:194443"/>
        <dbReference type="EC" id="2.4.99.17"/>
    </reaction>
</comment>
<comment type="pathway">
    <text evidence="1">tRNA modification; tRNA-queuosine biosynthesis.</text>
</comment>
<comment type="subunit">
    <text evidence="1">Monomer.</text>
</comment>
<comment type="subcellular location">
    <subcellularLocation>
        <location evidence="1">Cytoplasm</location>
    </subcellularLocation>
</comment>
<comment type="similarity">
    <text evidence="1">Belongs to the QueA family.</text>
</comment>
<name>QUEA_PELPB</name>
<feature type="chain" id="PRO_1000094794" description="S-adenosylmethionine:tRNA ribosyltransferase-isomerase">
    <location>
        <begin position="1"/>
        <end position="341"/>
    </location>
</feature>
<protein>
    <recommendedName>
        <fullName evidence="1">S-adenosylmethionine:tRNA ribosyltransferase-isomerase</fullName>
        <ecNumber evidence="1">2.4.99.17</ecNumber>
    </recommendedName>
    <alternativeName>
        <fullName evidence="1">Queuosine biosynthesis protein QueA</fullName>
    </alternativeName>
</protein>
<gene>
    <name evidence="1" type="primary">queA</name>
    <name type="ordered locus">Ppha_0850</name>
</gene>
<reference key="1">
    <citation type="submission" date="2008-06" db="EMBL/GenBank/DDBJ databases">
        <title>Complete sequence of Pelodictyon phaeoclathratiforme BU-1.</title>
        <authorList>
            <consortium name="US DOE Joint Genome Institute"/>
            <person name="Lucas S."/>
            <person name="Copeland A."/>
            <person name="Lapidus A."/>
            <person name="Glavina del Rio T."/>
            <person name="Dalin E."/>
            <person name="Tice H."/>
            <person name="Bruce D."/>
            <person name="Goodwin L."/>
            <person name="Pitluck S."/>
            <person name="Schmutz J."/>
            <person name="Larimer F."/>
            <person name="Land M."/>
            <person name="Hauser L."/>
            <person name="Kyrpides N."/>
            <person name="Mikhailova N."/>
            <person name="Liu Z."/>
            <person name="Li T."/>
            <person name="Zhao F."/>
            <person name="Overmann J."/>
            <person name="Bryant D.A."/>
            <person name="Richardson P."/>
        </authorList>
    </citation>
    <scope>NUCLEOTIDE SEQUENCE [LARGE SCALE GENOMIC DNA]</scope>
    <source>
        <strain>DSM 5477 / BU-1</strain>
    </source>
</reference>
<organism>
    <name type="scientific">Pelodictyon phaeoclathratiforme (strain DSM 5477 / BU-1)</name>
    <dbReference type="NCBI Taxonomy" id="324925"/>
    <lineage>
        <taxon>Bacteria</taxon>
        <taxon>Pseudomonadati</taxon>
        <taxon>Chlorobiota</taxon>
        <taxon>Chlorobiia</taxon>
        <taxon>Chlorobiales</taxon>
        <taxon>Chlorobiaceae</taxon>
        <taxon>Chlorobium/Pelodictyon group</taxon>
        <taxon>Pelodictyon</taxon>
    </lineage>
</organism>
<dbReference type="EC" id="2.4.99.17" evidence="1"/>
<dbReference type="EMBL" id="CP001110">
    <property type="protein sequence ID" value="ACF43138.1"/>
    <property type="molecule type" value="Genomic_DNA"/>
</dbReference>
<dbReference type="RefSeq" id="WP_012507633.1">
    <property type="nucleotide sequence ID" value="NC_011060.1"/>
</dbReference>
<dbReference type="SMR" id="B4SEZ1"/>
<dbReference type="STRING" id="324925.Ppha_0850"/>
<dbReference type="KEGG" id="pph:Ppha_0850"/>
<dbReference type="eggNOG" id="COG0809">
    <property type="taxonomic scope" value="Bacteria"/>
</dbReference>
<dbReference type="HOGENOM" id="CLU_039110_1_0_10"/>
<dbReference type="OrthoDB" id="9805933at2"/>
<dbReference type="UniPathway" id="UPA00392"/>
<dbReference type="Proteomes" id="UP000002724">
    <property type="component" value="Chromosome"/>
</dbReference>
<dbReference type="GO" id="GO:0005737">
    <property type="term" value="C:cytoplasm"/>
    <property type="evidence" value="ECO:0007669"/>
    <property type="project" value="UniProtKB-SubCell"/>
</dbReference>
<dbReference type="GO" id="GO:0051075">
    <property type="term" value="F:S-adenosylmethionine:tRNA ribosyltransferase-isomerase activity"/>
    <property type="evidence" value="ECO:0007669"/>
    <property type="project" value="UniProtKB-EC"/>
</dbReference>
<dbReference type="GO" id="GO:0008616">
    <property type="term" value="P:queuosine biosynthetic process"/>
    <property type="evidence" value="ECO:0007669"/>
    <property type="project" value="UniProtKB-UniRule"/>
</dbReference>
<dbReference type="GO" id="GO:0002099">
    <property type="term" value="P:tRNA wobble guanine modification"/>
    <property type="evidence" value="ECO:0007669"/>
    <property type="project" value="TreeGrafter"/>
</dbReference>
<dbReference type="Gene3D" id="2.40.10.240">
    <property type="entry name" value="QueA-like"/>
    <property type="match status" value="1"/>
</dbReference>
<dbReference type="Gene3D" id="3.40.1780.10">
    <property type="entry name" value="QueA-like"/>
    <property type="match status" value="1"/>
</dbReference>
<dbReference type="HAMAP" id="MF_00113">
    <property type="entry name" value="QueA"/>
    <property type="match status" value="1"/>
</dbReference>
<dbReference type="InterPro" id="IPR003699">
    <property type="entry name" value="QueA"/>
</dbReference>
<dbReference type="InterPro" id="IPR042118">
    <property type="entry name" value="QueA_dom1"/>
</dbReference>
<dbReference type="InterPro" id="IPR042119">
    <property type="entry name" value="QueA_dom2"/>
</dbReference>
<dbReference type="InterPro" id="IPR036100">
    <property type="entry name" value="QueA_sf"/>
</dbReference>
<dbReference type="NCBIfam" id="NF001140">
    <property type="entry name" value="PRK00147.1"/>
    <property type="match status" value="1"/>
</dbReference>
<dbReference type="NCBIfam" id="TIGR00113">
    <property type="entry name" value="queA"/>
    <property type="match status" value="1"/>
</dbReference>
<dbReference type="PANTHER" id="PTHR30307">
    <property type="entry name" value="S-ADENOSYLMETHIONINE:TRNA RIBOSYLTRANSFERASE-ISOMERASE"/>
    <property type="match status" value="1"/>
</dbReference>
<dbReference type="PANTHER" id="PTHR30307:SF0">
    <property type="entry name" value="S-ADENOSYLMETHIONINE:TRNA RIBOSYLTRANSFERASE-ISOMERASE"/>
    <property type="match status" value="1"/>
</dbReference>
<dbReference type="Pfam" id="PF02547">
    <property type="entry name" value="Queuosine_synth"/>
    <property type="match status" value="1"/>
</dbReference>
<dbReference type="SUPFAM" id="SSF111337">
    <property type="entry name" value="QueA-like"/>
    <property type="match status" value="1"/>
</dbReference>
<evidence type="ECO:0000255" key="1">
    <source>
        <dbReference type="HAMAP-Rule" id="MF_00113"/>
    </source>
</evidence>
<accession>B4SEZ1</accession>
<keyword id="KW-0963">Cytoplasm</keyword>
<keyword id="KW-0671">Queuosine biosynthesis</keyword>
<keyword id="KW-1185">Reference proteome</keyword>
<keyword id="KW-0949">S-adenosyl-L-methionine</keyword>
<keyword id="KW-0808">Transferase</keyword>
<sequence>MRTGDFDYELSEEKIAKYPPAERGSTRLLVLNRHSGAVVHASYASLDLFLQPGDLLVLNNTRVLRARLYASKSTGARIELMLLEKHQEEQNRVLYRGKLKKGDKLMAHDQELLVTDIVDHGIARIAVCGERSLSDLFERFGGVPIPPYLKRDAEEVDRERYQTVFAELPGSVAAPTASLNMTSELLDTLRRKGVDMVTLTLHVGLGTFLPVRADALEEHVMHREYYSIPATLVEKIRKVKTTGGRVIAVGTTVTRALEHAGERMETFTGDAPLTGEADIFIYPGYQFRIIDCLLTNFHAPRSTVLMLTAAFAGPDHLRNAYQKALEEGYRFLSYGDSMFIA</sequence>
<proteinExistence type="inferred from homology"/>